<reference key="1">
    <citation type="journal article" date="2008" name="PLoS Genet.">
        <title>Genomic islands in the pathogenic filamentous fungus Aspergillus fumigatus.</title>
        <authorList>
            <person name="Fedorova N.D."/>
            <person name="Khaldi N."/>
            <person name="Joardar V.S."/>
            <person name="Maiti R."/>
            <person name="Amedeo P."/>
            <person name="Anderson M.J."/>
            <person name="Crabtree J."/>
            <person name="Silva J.C."/>
            <person name="Badger J.H."/>
            <person name="Albarraq A."/>
            <person name="Angiuoli S."/>
            <person name="Bussey H."/>
            <person name="Bowyer P."/>
            <person name="Cotty P.J."/>
            <person name="Dyer P.S."/>
            <person name="Egan A."/>
            <person name="Galens K."/>
            <person name="Fraser-Liggett C.M."/>
            <person name="Haas B.J."/>
            <person name="Inman J.M."/>
            <person name="Kent R."/>
            <person name="Lemieux S."/>
            <person name="Malavazi I."/>
            <person name="Orvis J."/>
            <person name="Roemer T."/>
            <person name="Ronning C.M."/>
            <person name="Sundaram J.P."/>
            <person name="Sutton G."/>
            <person name="Turner G."/>
            <person name="Venter J.C."/>
            <person name="White O.R."/>
            <person name="Whitty B.R."/>
            <person name="Youngman P."/>
            <person name="Wolfe K.H."/>
            <person name="Goldman G.H."/>
            <person name="Wortman J.R."/>
            <person name="Jiang B."/>
            <person name="Denning D.W."/>
            <person name="Nierman W.C."/>
        </authorList>
    </citation>
    <scope>NUCLEOTIDE SEQUENCE [LARGE SCALE GENOMIC DNA]</scope>
    <source>
        <strain>ATCC 1007 / CBS 513.65 / DSM 816 / NCTC 3887 / NRRL 1 / QM 1276 / 107</strain>
    </source>
</reference>
<protein>
    <recommendedName>
        <fullName>Mitogen-activated protein kinase mpkC</fullName>
        <shortName>MAP kinase C</shortName>
        <ecNumber>2.7.11.24</ecNumber>
    </recommendedName>
</protein>
<feature type="chain" id="PRO_0000289712" description="Mitogen-activated protein kinase mpkC">
    <location>
        <begin position="1"/>
        <end position="380"/>
    </location>
</feature>
<feature type="domain" description="Protein kinase" evidence="2">
    <location>
        <begin position="20"/>
        <end position="300"/>
    </location>
</feature>
<feature type="short sequence motif" description="TXY">
    <location>
        <begin position="171"/>
        <end position="173"/>
    </location>
</feature>
<feature type="active site" description="Proton acceptor" evidence="2 3">
    <location>
        <position position="141"/>
    </location>
</feature>
<feature type="binding site" evidence="2">
    <location>
        <begin position="26"/>
        <end position="34"/>
    </location>
    <ligand>
        <name>ATP</name>
        <dbReference type="ChEBI" id="CHEBI:30616"/>
    </ligand>
</feature>
<feature type="binding site" evidence="2">
    <location>
        <position position="49"/>
    </location>
    <ligand>
        <name>ATP</name>
        <dbReference type="ChEBI" id="CHEBI:30616"/>
    </ligand>
</feature>
<feature type="modified residue" description="Phosphothreonine" evidence="1">
    <location>
        <position position="171"/>
    </location>
</feature>
<feature type="modified residue" description="Phosphotyrosine" evidence="1">
    <location>
        <position position="173"/>
    </location>
</feature>
<sequence length="380" mass="43486">MAEFVRAEILGTKFEYTTRYVNLQPIGMGSFGLVCSAFDQITQQLVALKKVMKPFDGSSLAKRTYREIKLLKYLRHENLICLRDIFISPLEDIYIATELLGTDLSRLLSVKPLDSQFAQYFIYQILRGLKYIHSANVIHRDLKPTNILINENCDLKICDFGLARLQEPQMTGYVSTRYYRAPEIMLTWQRYGVQVDIWSAGCILAEMLRGKPLFPGKDHVHQFHLITNILGNPPKSVLEKITSKNTMKFVQSLPSREPRDLSTIVPKDTDFDAIDLLKKMLVIDPDIRVSAQDALRHPYLAPYHDPTDEPVAAGPFDWSFNNMDLPKETWKVMIYSEVLDYLSVDSPDSGSMALGGSSPFDHRALDREFSEFFDDREGPM</sequence>
<comment type="function">
    <text evidence="1">Mitogen-activated protein kinase required for growth on media where sorbitol or mannitol is the sole carbon source.</text>
</comment>
<comment type="catalytic activity">
    <reaction>
        <text>L-seryl-[protein] + ATP = O-phospho-L-seryl-[protein] + ADP + H(+)</text>
        <dbReference type="Rhea" id="RHEA:17989"/>
        <dbReference type="Rhea" id="RHEA-COMP:9863"/>
        <dbReference type="Rhea" id="RHEA-COMP:11604"/>
        <dbReference type="ChEBI" id="CHEBI:15378"/>
        <dbReference type="ChEBI" id="CHEBI:29999"/>
        <dbReference type="ChEBI" id="CHEBI:30616"/>
        <dbReference type="ChEBI" id="CHEBI:83421"/>
        <dbReference type="ChEBI" id="CHEBI:456216"/>
        <dbReference type="EC" id="2.7.11.24"/>
    </reaction>
</comment>
<comment type="catalytic activity">
    <reaction>
        <text>L-threonyl-[protein] + ATP = O-phospho-L-threonyl-[protein] + ADP + H(+)</text>
        <dbReference type="Rhea" id="RHEA:46608"/>
        <dbReference type="Rhea" id="RHEA-COMP:11060"/>
        <dbReference type="Rhea" id="RHEA-COMP:11605"/>
        <dbReference type="ChEBI" id="CHEBI:15378"/>
        <dbReference type="ChEBI" id="CHEBI:30013"/>
        <dbReference type="ChEBI" id="CHEBI:30616"/>
        <dbReference type="ChEBI" id="CHEBI:61977"/>
        <dbReference type="ChEBI" id="CHEBI:456216"/>
        <dbReference type="EC" id="2.7.11.24"/>
    </reaction>
</comment>
<comment type="cofactor">
    <cofactor evidence="1">
        <name>Mg(2+)</name>
        <dbReference type="ChEBI" id="CHEBI:18420"/>
    </cofactor>
</comment>
<comment type="activity regulation">
    <text evidence="1">Activated by tyrosine and threonine phosphorylation.</text>
</comment>
<comment type="domain">
    <text>The TXY motif contains the threonine and tyrosine residues whose phosphorylation activates the MAP kinases.</text>
</comment>
<comment type="PTM">
    <text evidence="1">Dually phosphorylated on Thr-171 and Tyr-173, which activates the enzyme.</text>
</comment>
<comment type="similarity">
    <text evidence="2">Belongs to the protein kinase superfamily. Ser/Thr protein kinase family. MAP kinase subfamily. HOG1 sub-subfamily.</text>
</comment>
<organism>
    <name type="scientific">Aspergillus clavatus (strain ATCC 1007 / CBS 513.65 / DSM 816 / NCTC 3887 / NRRL 1 / QM 1276 / 107)</name>
    <dbReference type="NCBI Taxonomy" id="344612"/>
    <lineage>
        <taxon>Eukaryota</taxon>
        <taxon>Fungi</taxon>
        <taxon>Dikarya</taxon>
        <taxon>Ascomycota</taxon>
        <taxon>Pezizomycotina</taxon>
        <taxon>Eurotiomycetes</taxon>
        <taxon>Eurotiomycetidae</taxon>
        <taxon>Eurotiales</taxon>
        <taxon>Aspergillaceae</taxon>
        <taxon>Aspergillus</taxon>
        <taxon>Aspergillus subgen. Fumigati</taxon>
    </lineage>
</organism>
<gene>
    <name type="primary">mpkC</name>
    <name type="ORF">ACLA_011450</name>
</gene>
<name>MPKC_ASPCL</name>
<proteinExistence type="inferred from homology"/>
<keyword id="KW-0067">ATP-binding</keyword>
<keyword id="KW-0418">Kinase</keyword>
<keyword id="KW-0547">Nucleotide-binding</keyword>
<keyword id="KW-0597">Phosphoprotein</keyword>
<keyword id="KW-1185">Reference proteome</keyword>
<keyword id="KW-0723">Serine/threonine-protein kinase</keyword>
<keyword id="KW-0808">Transferase</keyword>
<accession>A1CAF0</accession>
<evidence type="ECO:0000250" key="1"/>
<evidence type="ECO:0000255" key="2">
    <source>
        <dbReference type="PROSITE-ProRule" id="PRU00159"/>
    </source>
</evidence>
<evidence type="ECO:0000255" key="3">
    <source>
        <dbReference type="PROSITE-ProRule" id="PRU10027"/>
    </source>
</evidence>
<dbReference type="EC" id="2.7.11.24"/>
<dbReference type="EMBL" id="DS027049">
    <property type="protein sequence ID" value="EAW12718.1"/>
    <property type="molecule type" value="Genomic_DNA"/>
</dbReference>
<dbReference type="RefSeq" id="XP_001274144.1">
    <property type="nucleotide sequence ID" value="XM_001274143.1"/>
</dbReference>
<dbReference type="SMR" id="A1CAF0"/>
<dbReference type="STRING" id="344612.A1CAF0"/>
<dbReference type="EnsemblFungi" id="EAW12718">
    <property type="protein sequence ID" value="EAW12718"/>
    <property type="gene ID" value="ACLA_011450"/>
</dbReference>
<dbReference type="GeneID" id="4706955"/>
<dbReference type="KEGG" id="act:ACLA_011450"/>
<dbReference type="VEuPathDB" id="FungiDB:ACLA_011450"/>
<dbReference type="eggNOG" id="KOG0660">
    <property type="taxonomic scope" value="Eukaryota"/>
</dbReference>
<dbReference type="HOGENOM" id="CLU_000288_181_1_1"/>
<dbReference type="OMA" id="DHIHQFF"/>
<dbReference type="OrthoDB" id="192887at2759"/>
<dbReference type="Proteomes" id="UP000006701">
    <property type="component" value="Unassembled WGS sequence"/>
</dbReference>
<dbReference type="GO" id="GO:0005524">
    <property type="term" value="F:ATP binding"/>
    <property type="evidence" value="ECO:0007669"/>
    <property type="project" value="UniProtKB-KW"/>
</dbReference>
<dbReference type="GO" id="GO:0004707">
    <property type="term" value="F:MAP kinase activity"/>
    <property type="evidence" value="ECO:0007669"/>
    <property type="project" value="UniProtKB-EC"/>
</dbReference>
<dbReference type="GO" id="GO:0106310">
    <property type="term" value="F:protein serine kinase activity"/>
    <property type="evidence" value="ECO:0007669"/>
    <property type="project" value="RHEA"/>
</dbReference>
<dbReference type="FunFam" id="1.10.510.10:FF:000049">
    <property type="entry name" value="Mitogen-activated protein kinase"/>
    <property type="match status" value="1"/>
</dbReference>
<dbReference type="FunFam" id="3.30.200.20:FF:000046">
    <property type="entry name" value="Mitogen-activated protein kinase"/>
    <property type="match status" value="1"/>
</dbReference>
<dbReference type="Gene3D" id="3.30.200.20">
    <property type="entry name" value="Phosphorylase Kinase, domain 1"/>
    <property type="match status" value="1"/>
</dbReference>
<dbReference type="Gene3D" id="1.10.510.10">
    <property type="entry name" value="Transferase(Phosphotransferase) domain 1"/>
    <property type="match status" value="1"/>
</dbReference>
<dbReference type="InterPro" id="IPR011009">
    <property type="entry name" value="Kinase-like_dom_sf"/>
</dbReference>
<dbReference type="InterPro" id="IPR050117">
    <property type="entry name" value="MAP_kinase"/>
</dbReference>
<dbReference type="InterPro" id="IPR003527">
    <property type="entry name" value="MAP_kinase_CS"/>
</dbReference>
<dbReference type="InterPro" id="IPR000719">
    <property type="entry name" value="Prot_kinase_dom"/>
</dbReference>
<dbReference type="InterPro" id="IPR017441">
    <property type="entry name" value="Protein_kinase_ATP_BS"/>
</dbReference>
<dbReference type="InterPro" id="IPR008271">
    <property type="entry name" value="Ser/Thr_kinase_AS"/>
</dbReference>
<dbReference type="PANTHER" id="PTHR24055">
    <property type="entry name" value="MITOGEN-ACTIVATED PROTEIN KINASE"/>
    <property type="match status" value="1"/>
</dbReference>
<dbReference type="Pfam" id="PF00069">
    <property type="entry name" value="Pkinase"/>
    <property type="match status" value="1"/>
</dbReference>
<dbReference type="SMART" id="SM00220">
    <property type="entry name" value="S_TKc"/>
    <property type="match status" value="1"/>
</dbReference>
<dbReference type="SUPFAM" id="SSF56112">
    <property type="entry name" value="Protein kinase-like (PK-like)"/>
    <property type="match status" value="1"/>
</dbReference>
<dbReference type="PROSITE" id="PS01351">
    <property type="entry name" value="MAPK"/>
    <property type="match status" value="1"/>
</dbReference>
<dbReference type="PROSITE" id="PS00107">
    <property type="entry name" value="PROTEIN_KINASE_ATP"/>
    <property type="match status" value="1"/>
</dbReference>
<dbReference type="PROSITE" id="PS50011">
    <property type="entry name" value="PROTEIN_KINASE_DOM"/>
    <property type="match status" value="1"/>
</dbReference>
<dbReference type="PROSITE" id="PS00108">
    <property type="entry name" value="PROTEIN_KINASE_ST"/>
    <property type="match status" value="1"/>
</dbReference>